<accession>A7ZBE9</accession>
<protein>
    <recommendedName>
        <fullName evidence="1">NADH-quinone oxidoreductase subunit H</fullName>
        <ecNumber evidence="1">7.1.1.-</ecNumber>
    </recommendedName>
    <alternativeName>
        <fullName evidence="1">NADH dehydrogenase I subunit H</fullName>
    </alternativeName>
    <alternativeName>
        <fullName evidence="1">NDH-1 subunit H</fullName>
    </alternativeName>
</protein>
<keyword id="KW-0997">Cell inner membrane</keyword>
<keyword id="KW-1003">Cell membrane</keyword>
<keyword id="KW-0472">Membrane</keyword>
<keyword id="KW-0520">NAD</keyword>
<keyword id="KW-0874">Quinone</keyword>
<keyword id="KW-1278">Translocase</keyword>
<keyword id="KW-0812">Transmembrane</keyword>
<keyword id="KW-1133">Transmembrane helix</keyword>
<keyword id="KW-0830">Ubiquinone</keyword>
<feature type="chain" id="PRO_1000073372" description="NADH-quinone oxidoreductase subunit H">
    <location>
        <begin position="1"/>
        <end position="331"/>
    </location>
</feature>
<feature type="transmembrane region" description="Helical" evidence="1">
    <location>
        <begin position="5"/>
        <end position="25"/>
    </location>
</feature>
<feature type="transmembrane region" description="Helical" evidence="1">
    <location>
        <begin position="45"/>
        <end position="65"/>
    </location>
</feature>
<feature type="transmembrane region" description="Helical" evidence="1">
    <location>
        <begin position="78"/>
        <end position="98"/>
    </location>
</feature>
<feature type="transmembrane region" description="Helical" evidence="1">
    <location>
        <begin position="122"/>
        <end position="142"/>
    </location>
</feature>
<feature type="transmembrane region" description="Helical" evidence="1">
    <location>
        <begin position="156"/>
        <end position="176"/>
    </location>
</feature>
<feature type="transmembrane region" description="Helical" evidence="1">
    <location>
        <begin position="192"/>
        <end position="212"/>
    </location>
</feature>
<feature type="transmembrane region" description="Helical" evidence="1">
    <location>
        <begin position="245"/>
        <end position="265"/>
    </location>
</feature>
<feature type="transmembrane region" description="Helical" evidence="1">
    <location>
        <begin position="271"/>
        <end position="291"/>
    </location>
</feature>
<feature type="transmembrane region" description="Helical" evidence="1">
    <location>
        <begin position="311"/>
        <end position="331"/>
    </location>
</feature>
<evidence type="ECO:0000255" key="1">
    <source>
        <dbReference type="HAMAP-Rule" id="MF_01350"/>
    </source>
</evidence>
<dbReference type="EC" id="7.1.1.-" evidence="1"/>
<dbReference type="EMBL" id="CP000792">
    <property type="protein sequence ID" value="EAT97879.1"/>
    <property type="molecule type" value="Genomic_DNA"/>
</dbReference>
<dbReference type="RefSeq" id="WP_004318044.1">
    <property type="nucleotide sequence ID" value="NC_009802.2"/>
</dbReference>
<dbReference type="SMR" id="A7ZBE9"/>
<dbReference type="STRING" id="360104.CCC13826_1663"/>
<dbReference type="KEGG" id="cco:CCC13826_1663"/>
<dbReference type="eggNOG" id="COG1005">
    <property type="taxonomic scope" value="Bacteria"/>
</dbReference>
<dbReference type="HOGENOM" id="CLU_015134_0_1_7"/>
<dbReference type="OrthoDB" id="9803734at2"/>
<dbReference type="Proteomes" id="UP000001121">
    <property type="component" value="Chromosome"/>
</dbReference>
<dbReference type="GO" id="GO:0005886">
    <property type="term" value="C:plasma membrane"/>
    <property type="evidence" value="ECO:0007669"/>
    <property type="project" value="UniProtKB-SubCell"/>
</dbReference>
<dbReference type="GO" id="GO:0003954">
    <property type="term" value="F:NADH dehydrogenase activity"/>
    <property type="evidence" value="ECO:0007669"/>
    <property type="project" value="TreeGrafter"/>
</dbReference>
<dbReference type="GO" id="GO:0016655">
    <property type="term" value="F:oxidoreductase activity, acting on NAD(P)H, quinone or similar compound as acceptor"/>
    <property type="evidence" value="ECO:0007669"/>
    <property type="project" value="UniProtKB-UniRule"/>
</dbReference>
<dbReference type="GO" id="GO:0048038">
    <property type="term" value="F:quinone binding"/>
    <property type="evidence" value="ECO:0007669"/>
    <property type="project" value="UniProtKB-KW"/>
</dbReference>
<dbReference type="GO" id="GO:0009060">
    <property type="term" value="P:aerobic respiration"/>
    <property type="evidence" value="ECO:0007669"/>
    <property type="project" value="TreeGrafter"/>
</dbReference>
<dbReference type="HAMAP" id="MF_01350">
    <property type="entry name" value="NDH1_NuoH"/>
    <property type="match status" value="1"/>
</dbReference>
<dbReference type="InterPro" id="IPR001694">
    <property type="entry name" value="NADH_UbQ_OxRdtase_su1/FPO"/>
</dbReference>
<dbReference type="InterPro" id="IPR018086">
    <property type="entry name" value="NADH_UbQ_OxRdtase_su1_CS"/>
</dbReference>
<dbReference type="NCBIfam" id="NF004741">
    <property type="entry name" value="PRK06076.1-2"/>
    <property type="match status" value="1"/>
</dbReference>
<dbReference type="PANTHER" id="PTHR11432">
    <property type="entry name" value="NADH DEHYDROGENASE SUBUNIT 1"/>
    <property type="match status" value="1"/>
</dbReference>
<dbReference type="PANTHER" id="PTHR11432:SF3">
    <property type="entry name" value="NADH-UBIQUINONE OXIDOREDUCTASE CHAIN 1"/>
    <property type="match status" value="1"/>
</dbReference>
<dbReference type="Pfam" id="PF00146">
    <property type="entry name" value="NADHdh"/>
    <property type="match status" value="1"/>
</dbReference>
<dbReference type="PROSITE" id="PS00667">
    <property type="entry name" value="COMPLEX1_ND1_1"/>
    <property type="match status" value="1"/>
</dbReference>
<name>NUOH_CAMC1</name>
<sequence>MSEMLFFVITTIVKAVVILAVMASLAGLATYAERKVLAYMQRRVGPDMVGPAGVLQIVADMIKLFTKEDIVPANANKFIFLIAPLISAIAAFAALAPVPFLPEFEVFGHTIRPILADINVGVLYIAGVAAVCVFSPLAAGLASYNKFALISAARAVVALLSFEVVAGMALLSVVMVTSSLSLVDINNYQKGIFNWLIFKQPLAFVLFVMASFVECNRTPFCLTENETEIVAGYGTEYSGMRWAMFFIGEYTNMIAASIIITLLFLGGFNEFLFIPGALMIILKSSLVFFFFLWTRASWPHLRVDQLSMLCWKILLPLGILNVVITGFALLI</sequence>
<gene>
    <name evidence="1" type="primary">nuoH</name>
    <name type="ordered locus">Ccon26_01920</name>
    <name type="ORF">CCC13826_1663</name>
</gene>
<comment type="function">
    <text evidence="1">NDH-1 shuttles electrons from NADH, via FMN and iron-sulfur (Fe-S) centers, to quinones in the respiratory chain. The immediate electron acceptor for the enzyme in this species is believed to be ubiquinone. Couples the redox reaction to proton translocation (for every two electrons transferred, four hydrogen ions are translocated across the cytoplasmic membrane), and thus conserves the redox energy in a proton gradient. This subunit may bind ubiquinone.</text>
</comment>
<comment type="catalytic activity">
    <reaction evidence="1">
        <text>a quinone + NADH + 5 H(+)(in) = a quinol + NAD(+) + 4 H(+)(out)</text>
        <dbReference type="Rhea" id="RHEA:57888"/>
        <dbReference type="ChEBI" id="CHEBI:15378"/>
        <dbReference type="ChEBI" id="CHEBI:24646"/>
        <dbReference type="ChEBI" id="CHEBI:57540"/>
        <dbReference type="ChEBI" id="CHEBI:57945"/>
        <dbReference type="ChEBI" id="CHEBI:132124"/>
    </reaction>
</comment>
<comment type="subunit">
    <text evidence="1">NDH-1 is composed of 14 different subunits. Subunits NuoA, H, J, K, L, M, N constitute the membrane sector of the complex.</text>
</comment>
<comment type="subcellular location">
    <subcellularLocation>
        <location evidence="1">Cell inner membrane</location>
        <topology evidence="1">Multi-pass membrane protein</topology>
    </subcellularLocation>
</comment>
<comment type="similarity">
    <text evidence="1">Belongs to the complex I subunit 1 family.</text>
</comment>
<proteinExistence type="inferred from homology"/>
<organism>
    <name type="scientific">Campylobacter concisus (strain 13826)</name>
    <dbReference type="NCBI Taxonomy" id="360104"/>
    <lineage>
        <taxon>Bacteria</taxon>
        <taxon>Pseudomonadati</taxon>
        <taxon>Campylobacterota</taxon>
        <taxon>Epsilonproteobacteria</taxon>
        <taxon>Campylobacterales</taxon>
        <taxon>Campylobacteraceae</taxon>
        <taxon>Campylobacter</taxon>
    </lineage>
</organism>
<reference key="1">
    <citation type="submission" date="2007-10" db="EMBL/GenBank/DDBJ databases">
        <title>Genome sequence of Campylobacter concisus 13826 isolated from human feces.</title>
        <authorList>
            <person name="Fouts D.E."/>
            <person name="Mongodin E.F."/>
            <person name="Puiu D."/>
            <person name="Sebastian Y."/>
            <person name="Miller W.G."/>
            <person name="Mandrell R.E."/>
            <person name="On S."/>
            <person name="Nelson K.E."/>
        </authorList>
    </citation>
    <scope>NUCLEOTIDE SEQUENCE [LARGE SCALE GENOMIC DNA]</scope>
    <source>
        <strain>13826</strain>
    </source>
</reference>